<organism>
    <name type="scientific">Salmonella paratyphi C (strain RKS4594)</name>
    <dbReference type="NCBI Taxonomy" id="476213"/>
    <lineage>
        <taxon>Bacteria</taxon>
        <taxon>Pseudomonadati</taxon>
        <taxon>Pseudomonadota</taxon>
        <taxon>Gammaproteobacteria</taxon>
        <taxon>Enterobacterales</taxon>
        <taxon>Enterobacteriaceae</taxon>
        <taxon>Salmonella</taxon>
    </lineage>
</organism>
<accession>C0Q0B0</accession>
<comment type="function">
    <text evidence="1">Binds the lower part of the 30S subunit head. Binds mRNA in the 70S ribosome, positioning it for translation.</text>
</comment>
<comment type="subunit">
    <text evidence="1">Part of the 30S ribosomal subunit. Forms a tight complex with proteins S10 and S14.</text>
</comment>
<comment type="similarity">
    <text evidence="1">Belongs to the universal ribosomal protein uS3 family.</text>
</comment>
<protein>
    <recommendedName>
        <fullName evidence="1">Small ribosomal subunit protein uS3</fullName>
    </recommendedName>
    <alternativeName>
        <fullName evidence="2">30S ribosomal protein S3</fullName>
    </alternativeName>
</protein>
<feature type="chain" id="PRO_1000165509" description="Small ribosomal subunit protein uS3">
    <location>
        <begin position="1"/>
        <end position="233"/>
    </location>
</feature>
<feature type="domain" description="KH type-2" evidence="1">
    <location>
        <begin position="39"/>
        <end position="107"/>
    </location>
</feature>
<proteinExistence type="inferred from homology"/>
<name>RS3_SALPC</name>
<keyword id="KW-0687">Ribonucleoprotein</keyword>
<keyword id="KW-0689">Ribosomal protein</keyword>
<keyword id="KW-0694">RNA-binding</keyword>
<keyword id="KW-0699">rRNA-binding</keyword>
<sequence>MGQKVHPNGIRLGIVKPWNSTWFANTKEFADNLDSDFKVRQYLTKELAKASVSRIVIERPAKSIRVTIHTARPGIVIGKKGEDVEKLRKVVADIAGVPAQINIAEVRKPELDAKLVADSITSQLERRVMFRRAMKRAVQNAMRLGAKGIKVEVSGRLGGAEIARTEWYREGRVPLHTLRADIDYNTSEAHTTYGVIGVKVWIFKGEILGGMAAVEQPEKPAAQPKKQQRKGRK</sequence>
<reference key="1">
    <citation type="journal article" date="2009" name="PLoS ONE">
        <title>Salmonella paratyphi C: genetic divergence from Salmonella choleraesuis and pathogenic convergence with Salmonella typhi.</title>
        <authorList>
            <person name="Liu W.-Q."/>
            <person name="Feng Y."/>
            <person name="Wang Y."/>
            <person name="Zou Q.-H."/>
            <person name="Chen F."/>
            <person name="Guo J.-T."/>
            <person name="Peng Y.-H."/>
            <person name="Jin Y."/>
            <person name="Li Y.-G."/>
            <person name="Hu S.-N."/>
            <person name="Johnston R.N."/>
            <person name="Liu G.-R."/>
            <person name="Liu S.-L."/>
        </authorList>
    </citation>
    <scope>NUCLEOTIDE SEQUENCE [LARGE SCALE GENOMIC DNA]</scope>
    <source>
        <strain>RKS4594</strain>
    </source>
</reference>
<dbReference type="EMBL" id="CP000857">
    <property type="protein sequence ID" value="ACN47587.1"/>
    <property type="molecule type" value="Genomic_DNA"/>
</dbReference>
<dbReference type="RefSeq" id="WP_000529945.1">
    <property type="nucleotide sequence ID" value="NC_012125.1"/>
</dbReference>
<dbReference type="SMR" id="C0Q0B0"/>
<dbReference type="GeneID" id="97603663"/>
<dbReference type="KEGG" id="sei:SPC_3503"/>
<dbReference type="HOGENOM" id="CLU_058591_0_2_6"/>
<dbReference type="Proteomes" id="UP000001599">
    <property type="component" value="Chromosome"/>
</dbReference>
<dbReference type="GO" id="GO:0022627">
    <property type="term" value="C:cytosolic small ribosomal subunit"/>
    <property type="evidence" value="ECO:0007669"/>
    <property type="project" value="TreeGrafter"/>
</dbReference>
<dbReference type="GO" id="GO:0003729">
    <property type="term" value="F:mRNA binding"/>
    <property type="evidence" value="ECO:0007669"/>
    <property type="project" value="UniProtKB-UniRule"/>
</dbReference>
<dbReference type="GO" id="GO:0019843">
    <property type="term" value="F:rRNA binding"/>
    <property type="evidence" value="ECO:0007669"/>
    <property type="project" value="UniProtKB-UniRule"/>
</dbReference>
<dbReference type="GO" id="GO:0003735">
    <property type="term" value="F:structural constituent of ribosome"/>
    <property type="evidence" value="ECO:0007669"/>
    <property type="project" value="InterPro"/>
</dbReference>
<dbReference type="GO" id="GO:0006412">
    <property type="term" value="P:translation"/>
    <property type="evidence" value="ECO:0007669"/>
    <property type="project" value="UniProtKB-UniRule"/>
</dbReference>
<dbReference type="CDD" id="cd02412">
    <property type="entry name" value="KH-II_30S_S3"/>
    <property type="match status" value="1"/>
</dbReference>
<dbReference type="FunFam" id="3.30.1140.32:FF:000001">
    <property type="entry name" value="30S ribosomal protein S3"/>
    <property type="match status" value="1"/>
</dbReference>
<dbReference type="FunFam" id="3.30.300.20:FF:000001">
    <property type="entry name" value="30S ribosomal protein S3"/>
    <property type="match status" value="1"/>
</dbReference>
<dbReference type="Gene3D" id="3.30.300.20">
    <property type="match status" value="1"/>
</dbReference>
<dbReference type="Gene3D" id="3.30.1140.32">
    <property type="entry name" value="Ribosomal protein S3, C-terminal domain"/>
    <property type="match status" value="1"/>
</dbReference>
<dbReference type="HAMAP" id="MF_01309_B">
    <property type="entry name" value="Ribosomal_uS3_B"/>
    <property type="match status" value="1"/>
</dbReference>
<dbReference type="InterPro" id="IPR004087">
    <property type="entry name" value="KH_dom"/>
</dbReference>
<dbReference type="InterPro" id="IPR015946">
    <property type="entry name" value="KH_dom-like_a/b"/>
</dbReference>
<dbReference type="InterPro" id="IPR004044">
    <property type="entry name" value="KH_dom_type_2"/>
</dbReference>
<dbReference type="InterPro" id="IPR009019">
    <property type="entry name" value="KH_sf_prok-type"/>
</dbReference>
<dbReference type="InterPro" id="IPR036419">
    <property type="entry name" value="Ribosomal_S3_C_sf"/>
</dbReference>
<dbReference type="InterPro" id="IPR005704">
    <property type="entry name" value="Ribosomal_uS3_bac-typ"/>
</dbReference>
<dbReference type="InterPro" id="IPR001351">
    <property type="entry name" value="Ribosomal_uS3_C"/>
</dbReference>
<dbReference type="InterPro" id="IPR018280">
    <property type="entry name" value="Ribosomal_uS3_CS"/>
</dbReference>
<dbReference type="NCBIfam" id="TIGR01009">
    <property type="entry name" value="rpsC_bact"/>
    <property type="match status" value="1"/>
</dbReference>
<dbReference type="PANTHER" id="PTHR11760">
    <property type="entry name" value="30S/40S RIBOSOMAL PROTEIN S3"/>
    <property type="match status" value="1"/>
</dbReference>
<dbReference type="PANTHER" id="PTHR11760:SF19">
    <property type="entry name" value="SMALL RIBOSOMAL SUBUNIT PROTEIN US3C"/>
    <property type="match status" value="1"/>
</dbReference>
<dbReference type="Pfam" id="PF07650">
    <property type="entry name" value="KH_2"/>
    <property type="match status" value="1"/>
</dbReference>
<dbReference type="Pfam" id="PF00189">
    <property type="entry name" value="Ribosomal_S3_C"/>
    <property type="match status" value="1"/>
</dbReference>
<dbReference type="SMART" id="SM00322">
    <property type="entry name" value="KH"/>
    <property type="match status" value="1"/>
</dbReference>
<dbReference type="SUPFAM" id="SSF54814">
    <property type="entry name" value="Prokaryotic type KH domain (KH-domain type II)"/>
    <property type="match status" value="1"/>
</dbReference>
<dbReference type="SUPFAM" id="SSF54821">
    <property type="entry name" value="Ribosomal protein S3 C-terminal domain"/>
    <property type="match status" value="1"/>
</dbReference>
<dbReference type="PROSITE" id="PS50823">
    <property type="entry name" value="KH_TYPE_2"/>
    <property type="match status" value="1"/>
</dbReference>
<dbReference type="PROSITE" id="PS00548">
    <property type="entry name" value="RIBOSOMAL_S3"/>
    <property type="match status" value="1"/>
</dbReference>
<gene>
    <name evidence="1" type="primary">rpsC</name>
    <name type="ordered locus">SPC_3503</name>
</gene>
<evidence type="ECO:0000255" key="1">
    <source>
        <dbReference type="HAMAP-Rule" id="MF_01309"/>
    </source>
</evidence>
<evidence type="ECO:0000305" key="2"/>